<keyword id="KW-0046">Antibiotic resistance</keyword>
<keyword id="KW-0378">Hydrolase</keyword>
<keyword id="KW-0441">Lipid A biosynthesis</keyword>
<keyword id="KW-0444">Lipid biosynthesis</keyword>
<keyword id="KW-0443">Lipid metabolism</keyword>
<keyword id="KW-0448">Lipopolysaccharide biosynthesis</keyword>
<reference key="1">
    <citation type="journal article" date="2011" name="J. Bacteriol.">
        <title>Comparative genomics of 28 Salmonella enterica isolates: evidence for CRISPR-mediated adaptive sublineage evolution.</title>
        <authorList>
            <person name="Fricke W.F."/>
            <person name="Mammel M.K."/>
            <person name="McDermott P.F."/>
            <person name="Tartera C."/>
            <person name="White D.G."/>
            <person name="Leclerc J.E."/>
            <person name="Ravel J."/>
            <person name="Cebula T.A."/>
        </authorList>
    </citation>
    <scope>NUCLEOTIDE SEQUENCE [LARGE SCALE GENOMIC DNA]</scope>
    <source>
        <strain>CVM19633</strain>
    </source>
</reference>
<accession>B4TPI3</accession>
<proteinExistence type="inferred from homology"/>
<protein>
    <recommendedName>
        <fullName evidence="1">Probable 4-deoxy-4-formamido-L-arabinose-phosphoundecaprenol deformylase ArnD</fullName>
        <ecNumber evidence="1">3.5.1.n3</ecNumber>
    </recommendedName>
</protein>
<organism>
    <name type="scientific">Salmonella schwarzengrund (strain CVM19633)</name>
    <dbReference type="NCBI Taxonomy" id="439843"/>
    <lineage>
        <taxon>Bacteria</taxon>
        <taxon>Pseudomonadati</taxon>
        <taxon>Pseudomonadota</taxon>
        <taxon>Gammaproteobacteria</taxon>
        <taxon>Enterobacterales</taxon>
        <taxon>Enterobacteriaceae</taxon>
        <taxon>Salmonella</taxon>
    </lineage>
</organism>
<dbReference type="EC" id="3.5.1.n3" evidence="1"/>
<dbReference type="EMBL" id="CP001127">
    <property type="protein sequence ID" value="ACF92974.1"/>
    <property type="molecule type" value="Genomic_DNA"/>
</dbReference>
<dbReference type="RefSeq" id="WP_000169775.1">
    <property type="nucleotide sequence ID" value="NC_011094.1"/>
</dbReference>
<dbReference type="SMR" id="B4TPI3"/>
<dbReference type="KEGG" id="sew:SeSA_A2528"/>
<dbReference type="HOGENOM" id="CLU_084199_0_0_6"/>
<dbReference type="UniPathway" id="UPA00030"/>
<dbReference type="UniPathway" id="UPA00036">
    <property type="reaction ID" value="UER00496"/>
</dbReference>
<dbReference type="Proteomes" id="UP000001865">
    <property type="component" value="Chromosome"/>
</dbReference>
<dbReference type="GO" id="GO:0016020">
    <property type="term" value="C:membrane"/>
    <property type="evidence" value="ECO:0007669"/>
    <property type="project" value="GOC"/>
</dbReference>
<dbReference type="GO" id="GO:0016811">
    <property type="term" value="F:hydrolase activity, acting on carbon-nitrogen (but not peptide) bonds, in linear amides"/>
    <property type="evidence" value="ECO:0007669"/>
    <property type="project" value="UniProtKB-UniRule"/>
</dbReference>
<dbReference type="GO" id="GO:0036108">
    <property type="term" value="P:4-amino-4-deoxy-alpha-L-arabinopyranosyl undecaprenyl phosphate biosynthetic process"/>
    <property type="evidence" value="ECO:0007669"/>
    <property type="project" value="UniProtKB-UniRule"/>
</dbReference>
<dbReference type="GO" id="GO:0009245">
    <property type="term" value="P:lipid A biosynthetic process"/>
    <property type="evidence" value="ECO:0007669"/>
    <property type="project" value="UniProtKB-UniRule"/>
</dbReference>
<dbReference type="GO" id="GO:0009103">
    <property type="term" value="P:lipopolysaccharide biosynthetic process"/>
    <property type="evidence" value="ECO:0007669"/>
    <property type="project" value="UniProtKB-UniRule"/>
</dbReference>
<dbReference type="GO" id="GO:0046677">
    <property type="term" value="P:response to antibiotic"/>
    <property type="evidence" value="ECO:0007669"/>
    <property type="project" value="UniProtKB-KW"/>
</dbReference>
<dbReference type="Gene3D" id="3.20.20.370">
    <property type="entry name" value="Glycoside hydrolase/deacetylase"/>
    <property type="match status" value="1"/>
</dbReference>
<dbReference type="HAMAP" id="MF_01870">
    <property type="entry name" value="ArnD"/>
    <property type="match status" value="1"/>
</dbReference>
<dbReference type="InterPro" id="IPR023557">
    <property type="entry name" value="ArnD"/>
</dbReference>
<dbReference type="InterPro" id="IPR011330">
    <property type="entry name" value="Glyco_hydro/deAcase_b/a-brl"/>
</dbReference>
<dbReference type="InterPro" id="IPR002509">
    <property type="entry name" value="NODB_dom"/>
</dbReference>
<dbReference type="InterPro" id="IPR050248">
    <property type="entry name" value="Polysacc_deacetylase_ArnD"/>
</dbReference>
<dbReference type="NCBIfam" id="NF011923">
    <property type="entry name" value="PRK15394.1"/>
    <property type="match status" value="1"/>
</dbReference>
<dbReference type="PANTHER" id="PTHR10587:SF137">
    <property type="entry name" value="4-DEOXY-4-FORMAMIDO-L-ARABINOSE-PHOSPHOUNDECAPRENOL DEFORMYLASE ARND-RELATED"/>
    <property type="match status" value="1"/>
</dbReference>
<dbReference type="PANTHER" id="PTHR10587">
    <property type="entry name" value="GLYCOSYL TRANSFERASE-RELATED"/>
    <property type="match status" value="1"/>
</dbReference>
<dbReference type="Pfam" id="PF01522">
    <property type="entry name" value="Polysacc_deac_1"/>
    <property type="match status" value="1"/>
</dbReference>
<dbReference type="SUPFAM" id="SSF88713">
    <property type="entry name" value="Glycoside hydrolase/deacetylase"/>
    <property type="match status" value="1"/>
</dbReference>
<dbReference type="PROSITE" id="PS51677">
    <property type="entry name" value="NODB"/>
    <property type="match status" value="1"/>
</dbReference>
<evidence type="ECO:0000255" key="1">
    <source>
        <dbReference type="HAMAP-Rule" id="MF_01870"/>
    </source>
</evidence>
<name>ARND_SALSV</name>
<sequence length="299" mass="33108">MTKVGLRIDVDTLRGTREGVPRLLETLHRHGVQASFFFSVGPDNMGRHLWRLIKPRFLWKMLRSNAASLYGWDILLAGTAWPGKNIGNANAGIIRETATYHETGLHAWDHHAWQTHSGHWSIRQLEEDIARGITALEAIIGKPVTCSAAAGWRADGRVVRAKEPFNLRYNSDCRGTTLFRPLLMPGQTGTPQIPVTLPTWDEVIGPAVQAQSFNTWIISRMLQDKGTPVYTIHAEVEGIVHQPLFEDLLVRARDAGITFCPLGELLPTSPESLPLGQIVRGHIPGREGWLGCQQAASAS</sequence>
<comment type="function">
    <text evidence="1">Catalyzes the deformylation of 4-deoxy-4-formamido-L-arabinose-phosphoundecaprenol to 4-amino-4-deoxy-L-arabinose-phosphoundecaprenol. The modified arabinose is attached to lipid A and is required for resistance to polymyxin and cationic antimicrobial peptides.</text>
</comment>
<comment type="catalytic activity">
    <reaction evidence="1">
        <text>4-deoxy-4-formamido-alpha-L-arabinopyranosyl di-trans,octa-cis-undecaprenyl phosphate + H2O = 4-amino-4-deoxy-alpha-L-arabinopyranosyl di-trans,octa-cis-undecaprenyl phosphate + formate</text>
        <dbReference type="Rhea" id="RHEA:27734"/>
        <dbReference type="ChEBI" id="CHEBI:15377"/>
        <dbReference type="ChEBI" id="CHEBI:15740"/>
        <dbReference type="ChEBI" id="CHEBI:58909"/>
        <dbReference type="ChEBI" id="CHEBI:60463"/>
        <dbReference type="EC" id="3.5.1.n3"/>
    </reaction>
</comment>
<comment type="pathway">
    <text evidence="1">Glycolipid biosynthesis; 4-amino-4-deoxy-alpha-L-arabinose undecaprenyl phosphate biosynthesis; 4-amino-4-deoxy-alpha-L-arabinose undecaprenyl phosphate from UDP-4-deoxy-4-formamido-beta-L-arabinose and undecaprenyl phosphate: step 2/2.</text>
</comment>
<comment type="pathway">
    <text evidence="1">Bacterial outer membrane biogenesis; lipopolysaccharide biosynthesis.</text>
</comment>
<comment type="similarity">
    <text evidence="1">Belongs to the polysaccharide deacetylase family. ArnD deformylase subfamily.</text>
</comment>
<gene>
    <name evidence="1" type="primary">arnD</name>
    <name type="ordered locus">SeSA_A2528</name>
</gene>
<feature type="chain" id="PRO_0000383538" description="Probable 4-deoxy-4-formamido-L-arabinose-phosphoundecaprenol deformylase ArnD">
    <location>
        <begin position="1"/>
        <end position="299"/>
    </location>
</feature>
<feature type="domain" description="NodB homology" evidence="1">
    <location>
        <begin position="2"/>
        <end position="260"/>
    </location>
</feature>